<accession>O67526</accession>
<name>ATPF_AQUAE</name>
<sequence length="185" mass="21242">MVRLISFLTLASTFAYAGEGHLGHSPGALIWKGLNILAFLGIVYYFGKKPISEAFNKFYNSIVESLVNAEREFMMAREELSKAKEELENAKKKAQEYEKLAIETAETEKKKILQHAQEVSERIKEKAKETIEIELNKAKKELALYGIQKAEEIAKDLLQKEFKKSKVQEKYIEAQLKLLEERKNA</sequence>
<organism>
    <name type="scientific">Aquifex aeolicus (strain VF5)</name>
    <dbReference type="NCBI Taxonomy" id="224324"/>
    <lineage>
        <taxon>Bacteria</taxon>
        <taxon>Pseudomonadati</taxon>
        <taxon>Aquificota</taxon>
        <taxon>Aquificia</taxon>
        <taxon>Aquificales</taxon>
        <taxon>Aquificaceae</taxon>
        <taxon>Aquifex</taxon>
    </lineage>
</organism>
<evidence type="ECO:0000255" key="1">
    <source>
        <dbReference type="HAMAP-Rule" id="MF_01398"/>
    </source>
</evidence>
<comment type="function">
    <text evidence="1">F(1)F(0) ATP synthase produces ATP from ADP in the presence of a proton or sodium gradient. F-type ATPases consist of two structural domains, F(1) containing the extramembraneous catalytic core and F(0) containing the membrane proton channel, linked together by a central stalk and a peripheral stalk. During catalysis, ATP synthesis in the catalytic domain of F(1) is coupled via a rotary mechanism of the central stalk subunits to proton translocation.</text>
</comment>
<comment type="function">
    <text evidence="1">Component of the F(0) channel, it forms part of the peripheral stalk, linking F(1) to F(0).</text>
</comment>
<comment type="subunit">
    <text evidence="1">F-type ATPases have 2 components, F(1) - the catalytic core - and F(0) - the membrane proton channel. F(1) has five subunits: alpha(3), beta(3), gamma(1), delta(1), epsilon(1). F(0) has three main subunits: a(1), b(2) and c(10-14). The alpha and beta chains form an alternating ring which encloses part of the gamma chain. F(1) is attached to F(0) by a central stalk formed by the gamma and epsilon chains, while a peripheral stalk is formed by the delta and b chains.</text>
</comment>
<comment type="subcellular location">
    <subcellularLocation>
        <location evidence="1">Cell inner membrane</location>
        <topology evidence="1">Single-pass membrane protein</topology>
    </subcellularLocation>
</comment>
<comment type="similarity">
    <text evidence="1">Belongs to the ATPase B chain family.</text>
</comment>
<protein>
    <recommendedName>
        <fullName evidence="1">ATP synthase subunit b</fullName>
    </recommendedName>
    <alternativeName>
        <fullName evidence="1">ATP synthase F(0) sector subunit b</fullName>
    </alternativeName>
    <alternativeName>
        <fullName evidence="1">ATPase subunit I</fullName>
    </alternativeName>
    <alternativeName>
        <fullName evidence="1">F-type ATPase subunit b</fullName>
        <shortName evidence="1">F-ATPase subunit b</shortName>
    </alternativeName>
</protein>
<gene>
    <name evidence="1" type="primary">atpF</name>
    <name type="ordered locus">aq_1587</name>
</gene>
<proteinExistence type="inferred from homology"/>
<reference key="1">
    <citation type="journal article" date="1998" name="Nature">
        <title>The complete genome of the hyperthermophilic bacterium Aquifex aeolicus.</title>
        <authorList>
            <person name="Deckert G."/>
            <person name="Warren P.V."/>
            <person name="Gaasterland T."/>
            <person name="Young W.G."/>
            <person name="Lenox A.L."/>
            <person name="Graham D.E."/>
            <person name="Overbeek R."/>
            <person name="Snead M.A."/>
            <person name="Keller M."/>
            <person name="Aujay M."/>
            <person name="Huber R."/>
            <person name="Feldman R.A."/>
            <person name="Short J.M."/>
            <person name="Olsen G.J."/>
            <person name="Swanson R.V."/>
        </authorList>
    </citation>
    <scope>NUCLEOTIDE SEQUENCE [LARGE SCALE GENOMIC DNA]</scope>
    <source>
        <strain>VF5</strain>
    </source>
</reference>
<dbReference type="EMBL" id="AE000657">
    <property type="protein sequence ID" value="AAC07478.1"/>
    <property type="molecule type" value="Genomic_DNA"/>
</dbReference>
<dbReference type="PIR" id="D70437">
    <property type="entry name" value="D70437"/>
</dbReference>
<dbReference type="RefSeq" id="NP_214091.1">
    <property type="nucleotide sequence ID" value="NC_000918.1"/>
</dbReference>
<dbReference type="RefSeq" id="WP_010881029.1">
    <property type="nucleotide sequence ID" value="NC_000918.1"/>
</dbReference>
<dbReference type="SMR" id="O67526"/>
<dbReference type="STRING" id="224324.aq_1587"/>
<dbReference type="EnsemblBacteria" id="AAC07478">
    <property type="protein sequence ID" value="AAC07478"/>
    <property type="gene ID" value="aq_1587"/>
</dbReference>
<dbReference type="KEGG" id="aae:aq_1587"/>
<dbReference type="eggNOG" id="COG0711">
    <property type="taxonomic scope" value="Bacteria"/>
</dbReference>
<dbReference type="HOGENOM" id="CLU_128247_0_0_0"/>
<dbReference type="InParanoid" id="O67526"/>
<dbReference type="OrthoDB" id="14836at2"/>
<dbReference type="Proteomes" id="UP000000798">
    <property type="component" value="Chromosome"/>
</dbReference>
<dbReference type="GO" id="GO:0005886">
    <property type="term" value="C:plasma membrane"/>
    <property type="evidence" value="ECO:0007669"/>
    <property type="project" value="UniProtKB-SubCell"/>
</dbReference>
<dbReference type="GO" id="GO:0045259">
    <property type="term" value="C:proton-transporting ATP synthase complex"/>
    <property type="evidence" value="ECO:0007669"/>
    <property type="project" value="UniProtKB-KW"/>
</dbReference>
<dbReference type="GO" id="GO:0046933">
    <property type="term" value="F:proton-transporting ATP synthase activity, rotational mechanism"/>
    <property type="evidence" value="ECO:0007669"/>
    <property type="project" value="UniProtKB-UniRule"/>
</dbReference>
<dbReference type="CDD" id="cd06503">
    <property type="entry name" value="ATP-synt_Fo_b"/>
    <property type="match status" value="1"/>
</dbReference>
<dbReference type="HAMAP" id="MF_01398">
    <property type="entry name" value="ATP_synth_b_bprime"/>
    <property type="match status" value="1"/>
</dbReference>
<dbReference type="InterPro" id="IPR002146">
    <property type="entry name" value="ATP_synth_b/b'su_bac/chlpt"/>
</dbReference>
<dbReference type="PANTHER" id="PTHR34264">
    <property type="entry name" value="ATP SYNTHASE SUBUNIT B, CHLOROPLASTIC"/>
    <property type="match status" value="1"/>
</dbReference>
<dbReference type="PANTHER" id="PTHR34264:SF3">
    <property type="entry name" value="ATP SYNTHASE SUBUNIT B, CHLOROPLASTIC"/>
    <property type="match status" value="1"/>
</dbReference>
<dbReference type="Pfam" id="PF00430">
    <property type="entry name" value="ATP-synt_B"/>
    <property type="match status" value="1"/>
</dbReference>
<feature type="chain" id="PRO_0000368313" description="ATP synthase subunit b">
    <location>
        <begin position="1"/>
        <end position="185"/>
    </location>
</feature>
<feature type="transmembrane region" description="Helical" evidence="1">
    <location>
        <begin position="27"/>
        <end position="47"/>
    </location>
</feature>
<keyword id="KW-0066">ATP synthesis</keyword>
<keyword id="KW-0997">Cell inner membrane</keyword>
<keyword id="KW-1003">Cell membrane</keyword>
<keyword id="KW-0138">CF(0)</keyword>
<keyword id="KW-0375">Hydrogen ion transport</keyword>
<keyword id="KW-0406">Ion transport</keyword>
<keyword id="KW-0472">Membrane</keyword>
<keyword id="KW-1185">Reference proteome</keyword>
<keyword id="KW-0812">Transmembrane</keyword>
<keyword id="KW-1133">Transmembrane helix</keyword>
<keyword id="KW-0813">Transport</keyword>